<reference key="1">
    <citation type="journal article" date="2005" name="Nucleic Acids Res.">
        <title>Genome dynamics and diversity of Shigella species, the etiologic agents of bacillary dysentery.</title>
        <authorList>
            <person name="Yang F."/>
            <person name="Yang J."/>
            <person name="Zhang X."/>
            <person name="Chen L."/>
            <person name="Jiang Y."/>
            <person name="Yan Y."/>
            <person name="Tang X."/>
            <person name="Wang J."/>
            <person name="Xiong Z."/>
            <person name="Dong J."/>
            <person name="Xue Y."/>
            <person name="Zhu Y."/>
            <person name="Xu X."/>
            <person name="Sun L."/>
            <person name="Chen S."/>
            <person name="Nie H."/>
            <person name="Peng J."/>
            <person name="Xu J."/>
            <person name="Wang Y."/>
            <person name="Yuan Z."/>
            <person name="Wen Y."/>
            <person name="Yao Z."/>
            <person name="Shen Y."/>
            <person name="Qiang B."/>
            <person name="Hou Y."/>
            <person name="Yu J."/>
            <person name="Jin Q."/>
        </authorList>
    </citation>
    <scope>NUCLEOTIDE SEQUENCE [LARGE SCALE GENOMIC DNA]</scope>
    <source>
        <strain>Sb227</strain>
    </source>
</reference>
<protein>
    <recommendedName>
        <fullName evidence="1">Translation initiation factor IF-1</fullName>
    </recommendedName>
</protein>
<name>IF1_SHIBS</name>
<organism>
    <name type="scientific">Shigella boydii serotype 4 (strain Sb227)</name>
    <dbReference type="NCBI Taxonomy" id="300268"/>
    <lineage>
        <taxon>Bacteria</taxon>
        <taxon>Pseudomonadati</taxon>
        <taxon>Pseudomonadota</taxon>
        <taxon>Gammaproteobacteria</taxon>
        <taxon>Enterobacterales</taxon>
        <taxon>Enterobacteriaceae</taxon>
        <taxon>Shigella</taxon>
    </lineage>
</organism>
<comment type="function">
    <text evidence="1">One of the essential components for the initiation of protein synthesis. Stabilizes the binding of IF-2 and IF-3 on the 30S subunit to which N-formylmethionyl-tRNA(fMet) subsequently binds. Helps modulate mRNA selection, yielding the 30S pre-initiation complex (PIC). Upon addition of the 50S ribosomal subunit IF-1, IF-2 and IF-3 are released leaving the mature 70S translation initiation complex.</text>
</comment>
<comment type="subunit">
    <text evidence="1">Component of the 30S ribosomal translation pre-initiation complex which assembles on the 30S ribosome in the order IF-2 and IF-3, IF-1 and N-formylmethionyl-tRNA(fMet); mRNA recruitment can occur at any time during PIC assembly.</text>
</comment>
<comment type="subcellular location">
    <subcellularLocation>
        <location evidence="1">Cytoplasm</location>
    </subcellularLocation>
</comment>
<comment type="similarity">
    <text evidence="1">Belongs to the IF-1 family.</text>
</comment>
<gene>
    <name evidence="1" type="primary">infA</name>
    <name type="ordered locus">SBO_0817</name>
</gene>
<feature type="chain" id="PRO_0000263870" description="Translation initiation factor IF-1">
    <location>
        <begin position="1"/>
        <end position="72"/>
    </location>
</feature>
<feature type="domain" description="S1-like" evidence="1">
    <location>
        <begin position="1"/>
        <end position="72"/>
    </location>
</feature>
<dbReference type="EMBL" id="CP000036">
    <property type="protein sequence ID" value="ABB65489.1"/>
    <property type="molecule type" value="Genomic_DNA"/>
</dbReference>
<dbReference type="RefSeq" id="WP_001040187.1">
    <property type="nucleotide sequence ID" value="NC_007613.1"/>
</dbReference>
<dbReference type="SMR" id="Q323L9"/>
<dbReference type="GeneID" id="93776536"/>
<dbReference type="KEGG" id="sbo:SBO_0817"/>
<dbReference type="HOGENOM" id="CLU_151267_1_0_6"/>
<dbReference type="Proteomes" id="UP000007067">
    <property type="component" value="Chromosome"/>
</dbReference>
<dbReference type="GO" id="GO:0005829">
    <property type="term" value="C:cytosol"/>
    <property type="evidence" value="ECO:0007669"/>
    <property type="project" value="TreeGrafter"/>
</dbReference>
<dbReference type="GO" id="GO:0043022">
    <property type="term" value="F:ribosome binding"/>
    <property type="evidence" value="ECO:0007669"/>
    <property type="project" value="UniProtKB-UniRule"/>
</dbReference>
<dbReference type="GO" id="GO:0019843">
    <property type="term" value="F:rRNA binding"/>
    <property type="evidence" value="ECO:0007669"/>
    <property type="project" value="UniProtKB-UniRule"/>
</dbReference>
<dbReference type="GO" id="GO:0003743">
    <property type="term" value="F:translation initiation factor activity"/>
    <property type="evidence" value="ECO:0007669"/>
    <property type="project" value="UniProtKB-UniRule"/>
</dbReference>
<dbReference type="CDD" id="cd04451">
    <property type="entry name" value="S1_IF1"/>
    <property type="match status" value="1"/>
</dbReference>
<dbReference type="FunFam" id="2.40.50.140:FF:000002">
    <property type="entry name" value="Translation initiation factor IF-1"/>
    <property type="match status" value="1"/>
</dbReference>
<dbReference type="Gene3D" id="2.40.50.140">
    <property type="entry name" value="Nucleic acid-binding proteins"/>
    <property type="match status" value="1"/>
</dbReference>
<dbReference type="HAMAP" id="MF_00075">
    <property type="entry name" value="IF_1"/>
    <property type="match status" value="1"/>
</dbReference>
<dbReference type="InterPro" id="IPR012340">
    <property type="entry name" value="NA-bd_OB-fold"/>
</dbReference>
<dbReference type="InterPro" id="IPR006196">
    <property type="entry name" value="RNA-binding_domain_S1_IF1"/>
</dbReference>
<dbReference type="InterPro" id="IPR003029">
    <property type="entry name" value="S1_domain"/>
</dbReference>
<dbReference type="InterPro" id="IPR004368">
    <property type="entry name" value="TIF_IF1"/>
</dbReference>
<dbReference type="NCBIfam" id="TIGR00008">
    <property type="entry name" value="infA"/>
    <property type="match status" value="1"/>
</dbReference>
<dbReference type="PANTHER" id="PTHR33370">
    <property type="entry name" value="TRANSLATION INITIATION FACTOR IF-1, CHLOROPLASTIC"/>
    <property type="match status" value="1"/>
</dbReference>
<dbReference type="PANTHER" id="PTHR33370:SF1">
    <property type="entry name" value="TRANSLATION INITIATION FACTOR IF-1, CHLOROPLASTIC"/>
    <property type="match status" value="1"/>
</dbReference>
<dbReference type="Pfam" id="PF01176">
    <property type="entry name" value="eIF-1a"/>
    <property type="match status" value="1"/>
</dbReference>
<dbReference type="SMART" id="SM00316">
    <property type="entry name" value="S1"/>
    <property type="match status" value="1"/>
</dbReference>
<dbReference type="SUPFAM" id="SSF50249">
    <property type="entry name" value="Nucleic acid-binding proteins"/>
    <property type="match status" value="1"/>
</dbReference>
<dbReference type="PROSITE" id="PS50832">
    <property type="entry name" value="S1_IF1_TYPE"/>
    <property type="match status" value="1"/>
</dbReference>
<proteinExistence type="inferred from homology"/>
<evidence type="ECO:0000255" key="1">
    <source>
        <dbReference type="HAMAP-Rule" id="MF_00075"/>
    </source>
</evidence>
<sequence length="72" mass="8250">MAKEDNIEMQGTVLETLPNTMFRVELENGHVVTAHISGKMRKNYIRILTGDKVTVELTPYDLSKGRIVFRSR</sequence>
<accession>Q323L9</accession>
<keyword id="KW-0963">Cytoplasm</keyword>
<keyword id="KW-0396">Initiation factor</keyword>
<keyword id="KW-0648">Protein biosynthesis</keyword>
<keyword id="KW-0694">RNA-binding</keyword>
<keyword id="KW-0699">rRNA-binding</keyword>